<dbReference type="EC" id="4.1.1.98" evidence="1"/>
<dbReference type="EMBL" id="CP000503">
    <property type="protein sequence ID" value="ABM23440.1"/>
    <property type="molecule type" value="Genomic_DNA"/>
</dbReference>
<dbReference type="RefSeq" id="WP_011787972.1">
    <property type="nucleotide sequence ID" value="NC_008750.1"/>
</dbReference>
<dbReference type="SMR" id="A1RFJ5"/>
<dbReference type="KEGG" id="shw:Sputw3181_0589"/>
<dbReference type="HOGENOM" id="CLU_023348_4_1_6"/>
<dbReference type="UniPathway" id="UPA00232"/>
<dbReference type="Proteomes" id="UP000002597">
    <property type="component" value="Chromosome"/>
</dbReference>
<dbReference type="GO" id="GO:0005829">
    <property type="term" value="C:cytosol"/>
    <property type="evidence" value="ECO:0007669"/>
    <property type="project" value="TreeGrafter"/>
</dbReference>
<dbReference type="GO" id="GO:0005886">
    <property type="term" value="C:plasma membrane"/>
    <property type="evidence" value="ECO:0007669"/>
    <property type="project" value="UniProtKB-SubCell"/>
</dbReference>
<dbReference type="GO" id="GO:0008694">
    <property type="term" value="F:3-octaprenyl-4-hydroxybenzoate carboxy-lyase activity"/>
    <property type="evidence" value="ECO:0007669"/>
    <property type="project" value="UniProtKB-UniRule"/>
</dbReference>
<dbReference type="GO" id="GO:0046872">
    <property type="term" value="F:metal ion binding"/>
    <property type="evidence" value="ECO:0007669"/>
    <property type="project" value="UniProtKB-KW"/>
</dbReference>
<dbReference type="GO" id="GO:0006744">
    <property type="term" value="P:ubiquinone biosynthetic process"/>
    <property type="evidence" value="ECO:0007669"/>
    <property type="project" value="UniProtKB-UniRule"/>
</dbReference>
<dbReference type="FunFam" id="1.20.5.570:FF:000001">
    <property type="entry name" value="3-octaprenyl-4-hydroxybenzoate carboxy-lyase"/>
    <property type="match status" value="1"/>
</dbReference>
<dbReference type="FunFam" id="3.40.1670.10:FF:000001">
    <property type="entry name" value="3-octaprenyl-4-hydroxybenzoate carboxy-lyase"/>
    <property type="match status" value="1"/>
</dbReference>
<dbReference type="Gene3D" id="1.20.5.570">
    <property type="entry name" value="Single helix bin"/>
    <property type="match status" value="1"/>
</dbReference>
<dbReference type="Gene3D" id="3.40.1670.10">
    <property type="entry name" value="UbiD C-terminal domain-like"/>
    <property type="match status" value="1"/>
</dbReference>
<dbReference type="HAMAP" id="MF_01636">
    <property type="entry name" value="UbiD"/>
    <property type="match status" value="1"/>
</dbReference>
<dbReference type="InterPro" id="IPR002830">
    <property type="entry name" value="UbiD"/>
</dbReference>
<dbReference type="InterPro" id="IPR049381">
    <property type="entry name" value="UbiD-like_C"/>
</dbReference>
<dbReference type="InterPro" id="IPR049383">
    <property type="entry name" value="UbiD-like_N"/>
</dbReference>
<dbReference type="InterPro" id="IPR023677">
    <property type="entry name" value="UbiD_bacteria"/>
</dbReference>
<dbReference type="InterPro" id="IPR048304">
    <property type="entry name" value="UbiD_Rift_dom"/>
</dbReference>
<dbReference type="NCBIfam" id="NF008175">
    <property type="entry name" value="PRK10922.1"/>
    <property type="match status" value="1"/>
</dbReference>
<dbReference type="NCBIfam" id="TIGR00148">
    <property type="entry name" value="UbiD family decarboxylase"/>
    <property type="match status" value="1"/>
</dbReference>
<dbReference type="PANTHER" id="PTHR30108">
    <property type="entry name" value="3-OCTAPRENYL-4-HYDROXYBENZOATE CARBOXY-LYASE-RELATED"/>
    <property type="match status" value="1"/>
</dbReference>
<dbReference type="PANTHER" id="PTHR30108:SF17">
    <property type="entry name" value="FERULIC ACID DECARBOXYLASE 1"/>
    <property type="match status" value="1"/>
</dbReference>
<dbReference type="Pfam" id="PF01977">
    <property type="entry name" value="UbiD"/>
    <property type="match status" value="1"/>
</dbReference>
<dbReference type="Pfam" id="PF20696">
    <property type="entry name" value="UbiD_C"/>
    <property type="match status" value="1"/>
</dbReference>
<dbReference type="Pfam" id="PF20695">
    <property type="entry name" value="UbiD_N"/>
    <property type="match status" value="1"/>
</dbReference>
<dbReference type="SUPFAM" id="SSF50475">
    <property type="entry name" value="FMN-binding split barrel"/>
    <property type="match status" value="1"/>
</dbReference>
<dbReference type="SUPFAM" id="SSF143968">
    <property type="entry name" value="UbiD C-terminal domain-like"/>
    <property type="match status" value="1"/>
</dbReference>
<name>UBID_SHESW</name>
<proteinExistence type="inferred from homology"/>
<organism>
    <name type="scientific">Shewanella sp. (strain W3-18-1)</name>
    <dbReference type="NCBI Taxonomy" id="351745"/>
    <lineage>
        <taxon>Bacteria</taxon>
        <taxon>Pseudomonadati</taxon>
        <taxon>Pseudomonadota</taxon>
        <taxon>Gammaproteobacteria</taxon>
        <taxon>Alteromonadales</taxon>
        <taxon>Shewanellaceae</taxon>
        <taxon>Shewanella</taxon>
    </lineage>
</organism>
<gene>
    <name evidence="1" type="primary">ubiD</name>
    <name type="ordered locus">Sputw3181_0589</name>
</gene>
<evidence type="ECO:0000255" key="1">
    <source>
        <dbReference type="HAMAP-Rule" id="MF_01636"/>
    </source>
</evidence>
<sequence>MSFKDLRSFIDHLEANGELKRISYPVDPHLEMTEIADRVLRAKGPALLFENPKNHHMPVLANLFGTPKRVAMALGKDDPLALREVGELLAFLKEPEPPRGFKDAIAKIPMFKQALNMPPKTVRNPPCQQIIKTGDEVDLTQLPIQHCWPGDVAPLVTWGLTITKGPRKSRQNLGIYRQQLLGKNKLIMRWLSHRGGALDFADFKEQFPGERYPVVVALGADPVTILGAVTPVPDSMSEYAFAGLLRGERTEVCKALSCDLEVPATSEIILEGYIDPEELAEEGPYGDHTGYYNETDKFPVFTVTHITQRKDAIYHSTYTGRPPDEPAMLGVALNEVFVPILRKQYPEIVDFYLPPEGCSYRMAVISIRKQYPGHAKRVMMGAWSFLRQFMYTKFIVIVDEDVNCRDWQDVIWAITTRMDPKRDTVMIENTPIDYLDFASPVAGLGSKMGLDATNKWEGETNREWGTPIVMDPKVKQKIDSIWDELGIDDSPTL</sequence>
<comment type="function">
    <text evidence="1">Catalyzes the decarboxylation of 3-octaprenyl-4-hydroxy benzoate to 2-octaprenylphenol, an intermediate step in ubiquinone biosynthesis.</text>
</comment>
<comment type="catalytic activity">
    <reaction evidence="1">
        <text>a 4-hydroxy-3-(all-trans-polyprenyl)benzoate + H(+) = a 2-(all-trans-polyprenyl)phenol + CO2</text>
        <dbReference type="Rhea" id="RHEA:41680"/>
        <dbReference type="Rhea" id="RHEA-COMP:9514"/>
        <dbReference type="Rhea" id="RHEA-COMP:9516"/>
        <dbReference type="ChEBI" id="CHEBI:1269"/>
        <dbReference type="ChEBI" id="CHEBI:15378"/>
        <dbReference type="ChEBI" id="CHEBI:16526"/>
        <dbReference type="ChEBI" id="CHEBI:78396"/>
        <dbReference type="EC" id="4.1.1.98"/>
    </reaction>
</comment>
<comment type="cofactor">
    <cofactor evidence="1">
        <name>prenylated FMN</name>
        <dbReference type="ChEBI" id="CHEBI:87746"/>
    </cofactor>
    <text evidence="1">Binds 1 prenylated FMN per subunit.</text>
</comment>
<comment type="cofactor">
    <cofactor evidence="1">
        <name>Mn(2+)</name>
        <dbReference type="ChEBI" id="CHEBI:29035"/>
    </cofactor>
</comment>
<comment type="pathway">
    <text evidence="1">Cofactor biosynthesis; ubiquinone biosynthesis.</text>
</comment>
<comment type="subunit">
    <text evidence="1">Homohexamer.</text>
</comment>
<comment type="subcellular location">
    <subcellularLocation>
        <location evidence="1">Cell membrane</location>
        <topology evidence="1">Peripheral membrane protein</topology>
    </subcellularLocation>
</comment>
<comment type="similarity">
    <text evidence="1">Belongs to the UbiD family.</text>
</comment>
<protein>
    <recommendedName>
        <fullName evidence="1">3-octaprenyl-4-hydroxybenzoate carboxy-lyase</fullName>
        <ecNumber evidence="1">4.1.1.98</ecNumber>
    </recommendedName>
    <alternativeName>
        <fullName evidence="1">Polyprenyl p-hydroxybenzoate decarboxylase</fullName>
    </alternativeName>
</protein>
<accession>A1RFJ5</accession>
<keyword id="KW-1003">Cell membrane</keyword>
<keyword id="KW-0210">Decarboxylase</keyword>
<keyword id="KW-0285">Flavoprotein</keyword>
<keyword id="KW-0288">FMN</keyword>
<keyword id="KW-0456">Lyase</keyword>
<keyword id="KW-0464">Manganese</keyword>
<keyword id="KW-0472">Membrane</keyword>
<keyword id="KW-0479">Metal-binding</keyword>
<keyword id="KW-0831">Ubiquinone biosynthesis</keyword>
<feature type="chain" id="PRO_1000069865" description="3-octaprenyl-4-hydroxybenzoate carboxy-lyase">
    <location>
        <begin position="1"/>
        <end position="493"/>
    </location>
</feature>
<feature type="active site" description="Proton donor" evidence="1">
    <location>
        <position position="287"/>
    </location>
</feature>
<feature type="binding site" evidence="1">
    <location>
        <position position="172"/>
    </location>
    <ligand>
        <name>Mn(2+)</name>
        <dbReference type="ChEBI" id="CHEBI:29035"/>
    </ligand>
</feature>
<feature type="binding site" evidence="1">
    <location>
        <begin position="175"/>
        <end position="177"/>
    </location>
    <ligand>
        <name>prenylated FMN</name>
        <dbReference type="ChEBI" id="CHEBI:87746"/>
    </ligand>
</feature>
<feature type="binding site" evidence="1">
    <location>
        <begin position="189"/>
        <end position="191"/>
    </location>
    <ligand>
        <name>prenylated FMN</name>
        <dbReference type="ChEBI" id="CHEBI:87746"/>
    </ligand>
</feature>
<feature type="binding site" evidence="1">
    <location>
        <begin position="194"/>
        <end position="195"/>
    </location>
    <ligand>
        <name>prenylated FMN</name>
        <dbReference type="ChEBI" id="CHEBI:87746"/>
    </ligand>
</feature>
<feature type="binding site" evidence="1">
    <location>
        <position position="238"/>
    </location>
    <ligand>
        <name>Mn(2+)</name>
        <dbReference type="ChEBI" id="CHEBI:29035"/>
    </ligand>
</feature>
<reference key="1">
    <citation type="submission" date="2006-12" db="EMBL/GenBank/DDBJ databases">
        <title>Complete sequence of Shewanella sp. W3-18-1.</title>
        <authorList>
            <consortium name="US DOE Joint Genome Institute"/>
            <person name="Copeland A."/>
            <person name="Lucas S."/>
            <person name="Lapidus A."/>
            <person name="Barry K."/>
            <person name="Detter J.C."/>
            <person name="Glavina del Rio T."/>
            <person name="Hammon N."/>
            <person name="Israni S."/>
            <person name="Dalin E."/>
            <person name="Tice H."/>
            <person name="Pitluck S."/>
            <person name="Chain P."/>
            <person name="Malfatti S."/>
            <person name="Shin M."/>
            <person name="Vergez L."/>
            <person name="Schmutz J."/>
            <person name="Larimer F."/>
            <person name="Land M."/>
            <person name="Hauser L."/>
            <person name="Kyrpides N."/>
            <person name="Lykidis A."/>
            <person name="Tiedje J."/>
            <person name="Richardson P."/>
        </authorList>
    </citation>
    <scope>NUCLEOTIDE SEQUENCE [LARGE SCALE GENOMIC DNA]</scope>
    <source>
        <strain>W3-18-1</strain>
    </source>
</reference>